<comment type="function">
    <text evidence="1">Catalyzes the interconversion of L-alanine and D-alanine. Provides the D-alanine required for cell wall biosynthesis (By similarity).</text>
</comment>
<comment type="catalytic activity">
    <reaction>
        <text>L-alanine = D-alanine</text>
        <dbReference type="Rhea" id="RHEA:20249"/>
        <dbReference type="ChEBI" id="CHEBI:57416"/>
        <dbReference type="ChEBI" id="CHEBI:57972"/>
        <dbReference type="EC" id="5.1.1.1"/>
    </reaction>
</comment>
<comment type="cofactor">
    <cofactor evidence="1">
        <name>pyridoxal 5'-phosphate</name>
        <dbReference type="ChEBI" id="CHEBI:597326"/>
    </cofactor>
</comment>
<comment type="pathway">
    <text>Amino-acid biosynthesis; D-alanine biosynthesis; D-alanine from L-alanine: step 1/1.</text>
</comment>
<comment type="pathway">
    <text>Cell wall biogenesis; peptidoglycan biosynthesis.</text>
</comment>
<comment type="similarity">
    <text evidence="2">Belongs to the alanine racemase family.</text>
</comment>
<reference key="1">
    <citation type="journal article" date="2001" name="Nature">
        <title>Genome sequence of enterohaemorrhagic Escherichia coli O157:H7.</title>
        <authorList>
            <person name="Perna N.T."/>
            <person name="Plunkett G. III"/>
            <person name="Burland V."/>
            <person name="Mau B."/>
            <person name="Glasner J.D."/>
            <person name="Rose D.J."/>
            <person name="Mayhew G.F."/>
            <person name="Evans P.S."/>
            <person name="Gregor J."/>
            <person name="Kirkpatrick H.A."/>
            <person name="Posfai G."/>
            <person name="Hackett J."/>
            <person name="Klink S."/>
            <person name="Boutin A."/>
            <person name="Shao Y."/>
            <person name="Miller L."/>
            <person name="Grotbeck E.J."/>
            <person name="Davis N.W."/>
            <person name="Lim A."/>
            <person name="Dimalanta E.T."/>
            <person name="Potamousis K."/>
            <person name="Apodaca J."/>
            <person name="Anantharaman T.S."/>
            <person name="Lin J."/>
            <person name="Yen G."/>
            <person name="Schwartz D.C."/>
            <person name="Welch R.A."/>
            <person name="Blattner F.R."/>
        </authorList>
    </citation>
    <scope>NUCLEOTIDE SEQUENCE [LARGE SCALE GENOMIC DNA]</scope>
    <source>
        <strain>O157:H7 / EDL933 / ATCC 700927 / EHEC</strain>
    </source>
</reference>
<reference key="2">
    <citation type="journal article" date="2001" name="DNA Res.">
        <title>Complete genome sequence of enterohemorrhagic Escherichia coli O157:H7 and genomic comparison with a laboratory strain K-12.</title>
        <authorList>
            <person name="Hayashi T."/>
            <person name="Makino K."/>
            <person name="Ohnishi M."/>
            <person name="Kurokawa K."/>
            <person name="Ishii K."/>
            <person name="Yokoyama K."/>
            <person name="Han C.-G."/>
            <person name="Ohtsubo E."/>
            <person name="Nakayama K."/>
            <person name="Murata T."/>
            <person name="Tanaka M."/>
            <person name="Tobe T."/>
            <person name="Iida T."/>
            <person name="Takami H."/>
            <person name="Honda T."/>
            <person name="Sasakawa C."/>
            <person name="Ogasawara N."/>
            <person name="Yasunaga T."/>
            <person name="Kuhara S."/>
            <person name="Shiba T."/>
            <person name="Hattori M."/>
            <person name="Shinagawa H."/>
        </authorList>
    </citation>
    <scope>NUCLEOTIDE SEQUENCE [LARGE SCALE GENOMIC DNA]</scope>
    <source>
        <strain>O157:H7 / Sakai / RIMD 0509952 / EHEC</strain>
    </source>
</reference>
<organism>
    <name type="scientific">Escherichia coli O157:H7</name>
    <dbReference type="NCBI Taxonomy" id="83334"/>
    <lineage>
        <taxon>Bacteria</taxon>
        <taxon>Pseudomonadati</taxon>
        <taxon>Pseudomonadota</taxon>
        <taxon>Gammaproteobacteria</taxon>
        <taxon>Enterobacterales</taxon>
        <taxon>Enterobacteriaceae</taxon>
        <taxon>Escherichia</taxon>
    </lineage>
</organism>
<gene>
    <name type="primary">alr</name>
    <name type="ordered locus">Z5651</name>
    <name type="ordered locus">ECs5035</name>
</gene>
<keyword id="KW-0133">Cell shape</keyword>
<keyword id="KW-0961">Cell wall biogenesis/degradation</keyword>
<keyword id="KW-0413">Isomerase</keyword>
<keyword id="KW-0573">Peptidoglycan synthesis</keyword>
<keyword id="KW-0663">Pyridoxal phosphate</keyword>
<keyword id="KW-1185">Reference proteome</keyword>
<evidence type="ECO:0000250" key="1"/>
<evidence type="ECO:0000305" key="2"/>
<proteinExistence type="inferred from homology"/>
<sequence>MQAATVVINRRALRHNLQRLRELAPASKMVAVVKANAYGHGLLETARTLPDADAFGVARLEEALRLRAGGITKPVLLLEGFFDARDLPTISAQHFHTAVHNEEQLAALEEASLDEPVTVWMKLDTGMHRLGVRPEQAEAFYHRLTQCKNVRQPVNIVSHFARADEPKCGATEKQLAIFNTFCEGKPGQRSIAASGGILLWPQSHFDWVRPGIILYGVSPLEDRSTGADFGCQPVMSLTSSLIAVREHKVGEPVGYGGTWISERDTRLGVVAMGYGDGYPRAAPSGTPVLVNGREVPIVGRVAMDMICVDLGPQAQDKAGDPVILWGEGLPVERIAEMTKVSAYELITRLTSRVAMKYVD</sequence>
<accession>Q8X5V2</accession>
<feature type="chain" id="PRO_0000114516" description="Alanine racemase, biosynthetic">
    <location>
        <begin position="1"/>
        <end position="359"/>
    </location>
</feature>
<feature type="active site" description="Proton acceptor; specific for D-alanine" evidence="1">
    <location>
        <position position="34"/>
    </location>
</feature>
<feature type="active site" description="Proton acceptor; specific for L-alanine" evidence="1">
    <location>
        <position position="255"/>
    </location>
</feature>
<feature type="binding site" evidence="1">
    <location>
        <position position="129"/>
    </location>
    <ligand>
        <name>substrate</name>
    </ligand>
</feature>
<feature type="binding site" evidence="1">
    <location>
        <position position="303"/>
    </location>
    <ligand>
        <name>substrate</name>
    </ligand>
</feature>
<feature type="modified residue" description="N6-(pyridoxal phosphate)lysine" evidence="1">
    <location>
        <position position="34"/>
    </location>
</feature>
<protein>
    <recommendedName>
        <fullName>Alanine racemase, biosynthetic</fullName>
        <ecNumber>5.1.1.1</ecNumber>
    </recommendedName>
</protein>
<name>ALR1_ECO57</name>
<dbReference type="EC" id="5.1.1.1"/>
<dbReference type="EMBL" id="AE005174">
    <property type="protein sequence ID" value="AAG59251.1"/>
    <property type="molecule type" value="Genomic_DNA"/>
</dbReference>
<dbReference type="EMBL" id="BA000007">
    <property type="protein sequence ID" value="BAB38458.1"/>
    <property type="molecule type" value="Genomic_DNA"/>
</dbReference>
<dbReference type="PIR" id="C91258">
    <property type="entry name" value="C91258"/>
</dbReference>
<dbReference type="PIR" id="G86098">
    <property type="entry name" value="G86098"/>
</dbReference>
<dbReference type="RefSeq" id="NP_313062.1">
    <property type="nucleotide sequence ID" value="NC_002695.1"/>
</dbReference>
<dbReference type="RefSeq" id="WP_001147332.1">
    <property type="nucleotide sequence ID" value="NZ_VOAI01000008.1"/>
</dbReference>
<dbReference type="SMR" id="Q8X5V2"/>
<dbReference type="STRING" id="155864.Z5651"/>
<dbReference type="GeneID" id="75169571"/>
<dbReference type="GeneID" id="914300"/>
<dbReference type="KEGG" id="ece:Z5651"/>
<dbReference type="KEGG" id="ecs:ECs_5035"/>
<dbReference type="PATRIC" id="fig|386585.9.peg.5258"/>
<dbReference type="eggNOG" id="COG0787">
    <property type="taxonomic scope" value="Bacteria"/>
</dbReference>
<dbReference type="HOGENOM" id="CLU_028393_1_0_6"/>
<dbReference type="OMA" id="WEILCGF"/>
<dbReference type="UniPathway" id="UPA00042">
    <property type="reaction ID" value="UER00497"/>
</dbReference>
<dbReference type="UniPathway" id="UPA00219"/>
<dbReference type="Proteomes" id="UP000000558">
    <property type="component" value="Chromosome"/>
</dbReference>
<dbReference type="Proteomes" id="UP000002519">
    <property type="component" value="Chromosome"/>
</dbReference>
<dbReference type="GO" id="GO:0005829">
    <property type="term" value="C:cytosol"/>
    <property type="evidence" value="ECO:0007669"/>
    <property type="project" value="TreeGrafter"/>
</dbReference>
<dbReference type="GO" id="GO:0008784">
    <property type="term" value="F:alanine racemase activity"/>
    <property type="evidence" value="ECO:0007669"/>
    <property type="project" value="UniProtKB-UniRule"/>
</dbReference>
<dbReference type="GO" id="GO:0030170">
    <property type="term" value="F:pyridoxal phosphate binding"/>
    <property type="evidence" value="ECO:0007669"/>
    <property type="project" value="UniProtKB-UniRule"/>
</dbReference>
<dbReference type="GO" id="GO:0071555">
    <property type="term" value="P:cell wall organization"/>
    <property type="evidence" value="ECO:0007669"/>
    <property type="project" value="UniProtKB-KW"/>
</dbReference>
<dbReference type="GO" id="GO:0030632">
    <property type="term" value="P:D-alanine biosynthetic process"/>
    <property type="evidence" value="ECO:0007669"/>
    <property type="project" value="UniProtKB-UniRule"/>
</dbReference>
<dbReference type="GO" id="GO:0009252">
    <property type="term" value="P:peptidoglycan biosynthetic process"/>
    <property type="evidence" value="ECO:0007669"/>
    <property type="project" value="UniProtKB-UniPathway"/>
</dbReference>
<dbReference type="GO" id="GO:0008360">
    <property type="term" value="P:regulation of cell shape"/>
    <property type="evidence" value="ECO:0007669"/>
    <property type="project" value="UniProtKB-KW"/>
</dbReference>
<dbReference type="CDD" id="cd06827">
    <property type="entry name" value="PLPDE_III_AR_proteobact"/>
    <property type="match status" value="1"/>
</dbReference>
<dbReference type="FunFam" id="2.40.37.10:FF:000002">
    <property type="entry name" value="Alanine racemase"/>
    <property type="match status" value="1"/>
</dbReference>
<dbReference type="FunFam" id="3.20.20.10:FF:000002">
    <property type="entry name" value="Alanine racemase"/>
    <property type="match status" value="1"/>
</dbReference>
<dbReference type="Gene3D" id="3.20.20.10">
    <property type="entry name" value="Alanine racemase"/>
    <property type="match status" value="1"/>
</dbReference>
<dbReference type="Gene3D" id="2.40.37.10">
    <property type="entry name" value="Lyase, Ornithine Decarboxylase, Chain A, domain 1"/>
    <property type="match status" value="1"/>
</dbReference>
<dbReference type="HAMAP" id="MF_01201">
    <property type="entry name" value="Ala_racemase"/>
    <property type="match status" value="1"/>
</dbReference>
<dbReference type="InterPro" id="IPR000821">
    <property type="entry name" value="Ala_racemase"/>
</dbReference>
<dbReference type="InterPro" id="IPR009006">
    <property type="entry name" value="Ala_racemase/Decarboxylase_C"/>
</dbReference>
<dbReference type="InterPro" id="IPR011079">
    <property type="entry name" value="Ala_racemase_C"/>
</dbReference>
<dbReference type="InterPro" id="IPR001608">
    <property type="entry name" value="Ala_racemase_N"/>
</dbReference>
<dbReference type="InterPro" id="IPR020622">
    <property type="entry name" value="Ala_racemase_pyridoxalP-BS"/>
</dbReference>
<dbReference type="InterPro" id="IPR029066">
    <property type="entry name" value="PLP-binding_barrel"/>
</dbReference>
<dbReference type="NCBIfam" id="TIGR00492">
    <property type="entry name" value="alr"/>
    <property type="match status" value="1"/>
</dbReference>
<dbReference type="PANTHER" id="PTHR30511">
    <property type="entry name" value="ALANINE RACEMASE"/>
    <property type="match status" value="1"/>
</dbReference>
<dbReference type="PANTHER" id="PTHR30511:SF4">
    <property type="entry name" value="ALANINE RACEMASE, BIOSYNTHETIC"/>
    <property type="match status" value="1"/>
</dbReference>
<dbReference type="Pfam" id="PF00842">
    <property type="entry name" value="Ala_racemase_C"/>
    <property type="match status" value="1"/>
</dbReference>
<dbReference type="Pfam" id="PF01168">
    <property type="entry name" value="Ala_racemase_N"/>
    <property type="match status" value="1"/>
</dbReference>
<dbReference type="PRINTS" id="PR00992">
    <property type="entry name" value="ALARACEMASE"/>
</dbReference>
<dbReference type="SMART" id="SM01005">
    <property type="entry name" value="Ala_racemase_C"/>
    <property type="match status" value="1"/>
</dbReference>
<dbReference type="SUPFAM" id="SSF50621">
    <property type="entry name" value="Alanine racemase C-terminal domain-like"/>
    <property type="match status" value="1"/>
</dbReference>
<dbReference type="SUPFAM" id="SSF51419">
    <property type="entry name" value="PLP-binding barrel"/>
    <property type="match status" value="1"/>
</dbReference>
<dbReference type="PROSITE" id="PS00395">
    <property type="entry name" value="ALANINE_RACEMASE"/>
    <property type="match status" value="1"/>
</dbReference>